<dbReference type="EC" id="2.1.1.199" evidence="1"/>
<dbReference type="EMBL" id="CP000830">
    <property type="protein sequence ID" value="ABV94208.1"/>
    <property type="molecule type" value="Genomic_DNA"/>
</dbReference>
<dbReference type="RefSeq" id="WP_012179139.1">
    <property type="nucleotide sequence ID" value="NC_009952.1"/>
</dbReference>
<dbReference type="SMR" id="A8LSB5"/>
<dbReference type="STRING" id="398580.Dshi_2474"/>
<dbReference type="KEGG" id="dsh:Dshi_2474"/>
<dbReference type="eggNOG" id="COG0275">
    <property type="taxonomic scope" value="Bacteria"/>
</dbReference>
<dbReference type="HOGENOM" id="CLU_038422_1_1_5"/>
<dbReference type="OrthoDB" id="9806637at2"/>
<dbReference type="Proteomes" id="UP000006833">
    <property type="component" value="Chromosome"/>
</dbReference>
<dbReference type="GO" id="GO:0005737">
    <property type="term" value="C:cytoplasm"/>
    <property type="evidence" value="ECO:0007669"/>
    <property type="project" value="UniProtKB-SubCell"/>
</dbReference>
<dbReference type="GO" id="GO:0071424">
    <property type="term" value="F:rRNA (cytosine-N4-)-methyltransferase activity"/>
    <property type="evidence" value="ECO:0007669"/>
    <property type="project" value="UniProtKB-UniRule"/>
</dbReference>
<dbReference type="GO" id="GO:0070475">
    <property type="term" value="P:rRNA base methylation"/>
    <property type="evidence" value="ECO:0007669"/>
    <property type="project" value="UniProtKB-UniRule"/>
</dbReference>
<dbReference type="CDD" id="cd02440">
    <property type="entry name" value="AdoMet_MTases"/>
    <property type="match status" value="1"/>
</dbReference>
<dbReference type="Gene3D" id="1.10.150.170">
    <property type="entry name" value="Putative methyltransferase TM0872, insert domain"/>
    <property type="match status" value="1"/>
</dbReference>
<dbReference type="Gene3D" id="3.40.50.150">
    <property type="entry name" value="Vaccinia Virus protein VP39"/>
    <property type="match status" value="1"/>
</dbReference>
<dbReference type="HAMAP" id="MF_01007">
    <property type="entry name" value="16SrRNA_methyltr_H"/>
    <property type="match status" value="1"/>
</dbReference>
<dbReference type="InterPro" id="IPR002903">
    <property type="entry name" value="RsmH"/>
</dbReference>
<dbReference type="InterPro" id="IPR023397">
    <property type="entry name" value="SAM-dep_MeTrfase_MraW_recog"/>
</dbReference>
<dbReference type="InterPro" id="IPR029063">
    <property type="entry name" value="SAM-dependent_MTases_sf"/>
</dbReference>
<dbReference type="NCBIfam" id="TIGR00006">
    <property type="entry name" value="16S rRNA (cytosine(1402)-N(4))-methyltransferase RsmH"/>
    <property type="match status" value="1"/>
</dbReference>
<dbReference type="PANTHER" id="PTHR11265:SF0">
    <property type="entry name" value="12S RRNA N4-METHYLCYTIDINE METHYLTRANSFERASE"/>
    <property type="match status" value="1"/>
</dbReference>
<dbReference type="PANTHER" id="PTHR11265">
    <property type="entry name" value="S-ADENOSYL-METHYLTRANSFERASE MRAW"/>
    <property type="match status" value="1"/>
</dbReference>
<dbReference type="Pfam" id="PF01795">
    <property type="entry name" value="Methyltransf_5"/>
    <property type="match status" value="1"/>
</dbReference>
<dbReference type="PIRSF" id="PIRSF004486">
    <property type="entry name" value="MraW"/>
    <property type="match status" value="1"/>
</dbReference>
<dbReference type="SUPFAM" id="SSF81799">
    <property type="entry name" value="Putative methyltransferase TM0872, insert domain"/>
    <property type="match status" value="1"/>
</dbReference>
<dbReference type="SUPFAM" id="SSF53335">
    <property type="entry name" value="S-adenosyl-L-methionine-dependent methyltransferases"/>
    <property type="match status" value="1"/>
</dbReference>
<evidence type="ECO:0000255" key="1">
    <source>
        <dbReference type="HAMAP-Rule" id="MF_01007"/>
    </source>
</evidence>
<protein>
    <recommendedName>
        <fullName evidence="1">Ribosomal RNA small subunit methyltransferase H</fullName>
        <ecNumber evidence="1">2.1.1.199</ecNumber>
    </recommendedName>
    <alternativeName>
        <fullName evidence="1">16S rRNA m(4)C1402 methyltransferase</fullName>
    </alternativeName>
    <alternativeName>
        <fullName evidence="1">rRNA (cytosine-N(4)-)-methyltransferase RsmH</fullName>
    </alternativeName>
</protein>
<reference key="1">
    <citation type="journal article" date="2010" name="ISME J.">
        <title>The complete genome sequence of the algal symbiont Dinoroseobacter shibae: a hitchhiker's guide to life in the sea.</title>
        <authorList>
            <person name="Wagner-Dobler I."/>
            <person name="Ballhausen B."/>
            <person name="Berger M."/>
            <person name="Brinkhoff T."/>
            <person name="Buchholz I."/>
            <person name="Bunk B."/>
            <person name="Cypionka H."/>
            <person name="Daniel R."/>
            <person name="Drepper T."/>
            <person name="Gerdts G."/>
            <person name="Hahnke S."/>
            <person name="Han C."/>
            <person name="Jahn D."/>
            <person name="Kalhoefer D."/>
            <person name="Kiss H."/>
            <person name="Klenk H.P."/>
            <person name="Kyrpides N."/>
            <person name="Liebl W."/>
            <person name="Liesegang H."/>
            <person name="Meincke L."/>
            <person name="Pati A."/>
            <person name="Petersen J."/>
            <person name="Piekarski T."/>
            <person name="Pommerenke C."/>
            <person name="Pradella S."/>
            <person name="Pukall R."/>
            <person name="Rabus R."/>
            <person name="Stackebrandt E."/>
            <person name="Thole S."/>
            <person name="Thompson L."/>
            <person name="Tielen P."/>
            <person name="Tomasch J."/>
            <person name="von Jan M."/>
            <person name="Wanphrut N."/>
            <person name="Wichels A."/>
            <person name="Zech H."/>
            <person name="Simon M."/>
        </authorList>
    </citation>
    <scope>NUCLEOTIDE SEQUENCE [LARGE SCALE GENOMIC DNA]</scope>
    <source>
        <strain>DSM 16493 / NCIMB 14021 / DFL 12</strain>
    </source>
</reference>
<comment type="function">
    <text evidence="1">Specifically methylates the N4 position of cytidine in position 1402 (C1402) of 16S rRNA.</text>
</comment>
<comment type="catalytic activity">
    <reaction evidence="1">
        <text>cytidine(1402) in 16S rRNA + S-adenosyl-L-methionine = N(4)-methylcytidine(1402) in 16S rRNA + S-adenosyl-L-homocysteine + H(+)</text>
        <dbReference type="Rhea" id="RHEA:42928"/>
        <dbReference type="Rhea" id="RHEA-COMP:10286"/>
        <dbReference type="Rhea" id="RHEA-COMP:10287"/>
        <dbReference type="ChEBI" id="CHEBI:15378"/>
        <dbReference type="ChEBI" id="CHEBI:57856"/>
        <dbReference type="ChEBI" id="CHEBI:59789"/>
        <dbReference type="ChEBI" id="CHEBI:74506"/>
        <dbReference type="ChEBI" id="CHEBI:82748"/>
        <dbReference type="EC" id="2.1.1.199"/>
    </reaction>
</comment>
<comment type="subcellular location">
    <subcellularLocation>
        <location evidence="1">Cytoplasm</location>
    </subcellularLocation>
</comment>
<comment type="similarity">
    <text evidence="1">Belongs to the methyltransferase superfamily. RsmH family.</text>
</comment>
<feature type="chain" id="PRO_0000386861" description="Ribosomal RNA small subunit methyltransferase H">
    <location>
        <begin position="1"/>
        <end position="333"/>
    </location>
</feature>
<feature type="binding site" evidence="1">
    <location>
        <begin position="39"/>
        <end position="41"/>
    </location>
    <ligand>
        <name>S-adenosyl-L-methionine</name>
        <dbReference type="ChEBI" id="CHEBI:59789"/>
    </ligand>
</feature>
<feature type="binding site" evidence="1">
    <location>
        <position position="57"/>
    </location>
    <ligand>
        <name>S-adenosyl-L-methionine</name>
        <dbReference type="ChEBI" id="CHEBI:59789"/>
    </ligand>
</feature>
<feature type="binding site" evidence="1">
    <location>
        <position position="84"/>
    </location>
    <ligand>
        <name>S-adenosyl-L-methionine</name>
        <dbReference type="ChEBI" id="CHEBI:59789"/>
    </ligand>
</feature>
<feature type="binding site" evidence="1">
    <location>
        <position position="101"/>
    </location>
    <ligand>
        <name>S-adenosyl-L-methionine</name>
        <dbReference type="ChEBI" id="CHEBI:59789"/>
    </ligand>
</feature>
<feature type="binding site" evidence="1">
    <location>
        <position position="108"/>
    </location>
    <ligand>
        <name>S-adenosyl-L-methionine</name>
        <dbReference type="ChEBI" id="CHEBI:59789"/>
    </ligand>
</feature>
<name>RSMH_DINSH</name>
<sequence length="333" mass="35434">MVAAQDPPNAPHIPVLLEPILTRCAPITGTWLDGTFGAGGYARGLLEAGADRVIGVDQDPLALEMAADWAGDYGDRLRLVAGNFEALDAHAGGPLDGVVLDLGVSSMQLDRAERGFSFLRDGPLDMRMAQHGRSAADLVAEEDADMLADILFHLGEERAARRIARAIVAARAVAPITRTSQLAEIVASCLPRPKPGQSHAATRSFQALRIAVNDELGALVRGLEAAEGALEPGGWLAVVTFHSIEDRIVKRFFTQASGGAGRANRYAPETEDTPARFRLEPRKAIAPTEAEVAANPRARSARLRIGRRTAAPAMPADRAALGLPHLYTLTETP</sequence>
<accession>A8LSB5</accession>
<proteinExistence type="inferred from homology"/>
<gene>
    <name evidence="1" type="primary">rsmH</name>
    <name type="synonym">mraW</name>
    <name type="ordered locus">Dshi_2474</name>
</gene>
<organism>
    <name type="scientific">Dinoroseobacter shibae (strain DSM 16493 / NCIMB 14021 / DFL 12)</name>
    <dbReference type="NCBI Taxonomy" id="398580"/>
    <lineage>
        <taxon>Bacteria</taxon>
        <taxon>Pseudomonadati</taxon>
        <taxon>Pseudomonadota</taxon>
        <taxon>Alphaproteobacteria</taxon>
        <taxon>Rhodobacterales</taxon>
        <taxon>Roseobacteraceae</taxon>
        <taxon>Dinoroseobacter</taxon>
    </lineage>
</organism>
<keyword id="KW-0963">Cytoplasm</keyword>
<keyword id="KW-0489">Methyltransferase</keyword>
<keyword id="KW-1185">Reference proteome</keyword>
<keyword id="KW-0698">rRNA processing</keyword>
<keyword id="KW-0949">S-adenosyl-L-methionine</keyword>
<keyword id="KW-0808">Transferase</keyword>